<protein>
    <recommendedName>
        <fullName evidence="1">Probable endonuclease 4</fullName>
        <ecNumber evidence="1">3.1.21.2</ecNumber>
    </recommendedName>
    <alternativeName>
        <fullName evidence="1">Endodeoxyribonuclease IV</fullName>
    </alternativeName>
    <alternativeName>
        <fullName evidence="1">Endonuclease IV</fullName>
    </alternativeName>
</protein>
<accession>Q9HJS3</accession>
<keyword id="KW-0227">DNA damage</keyword>
<keyword id="KW-0234">DNA repair</keyword>
<keyword id="KW-0255">Endonuclease</keyword>
<keyword id="KW-0378">Hydrolase</keyword>
<keyword id="KW-0479">Metal-binding</keyword>
<keyword id="KW-0540">Nuclease</keyword>
<keyword id="KW-1185">Reference proteome</keyword>
<keyword id="KW-0862">Zinc</keyword>
<name>END4_THEAC</name>
<organism>
    <name type="scientific">Thermoplasma acidophilum (strain ATCC 25905 / DSM 1728 / JCM 9062 / NBRC 15155 / AMRC-C165)</name>
    <dbReference type="NCBI Taxonomy" id="273075"/>
    <lineage>
        <taxon>Archaea</taxon>
        <taxon>Methanobacteriati</taxon>
        <taxon>Thermoplasmatota</taxon>
        <taxon>Thermoplasmata</taxon>
        <taxon>Thermoplasmatales</taxon>
        <taxon>Thermoplasmataceae</taxon>
        <taxon>Thermoplasma</taxon>
    </lineage>
</organism>
<evidence type="ECO:0000255" key="1">
    <source>
        <dbReference type="HAMAP-Rule" id="MF_00152"/>
    </source>
</evidence>
<proteinExistence type="inferred from homology"/>
<gene>
    <name evidence="1" type="primary">nfo</name>
    <name type="ordered locus">Ta0891</name>
</gene>
<comment type="function">
    <text evidence="1">Endonuclease IV plays a role in DNA repair. It cleaves phosphodiester bonds at apurinic or apyrimidinic (AP) sites, generating a 3'-hydroxyl group and a 5'-terminal sugar phosphate.</text>
</comment>
<comment type="catalytic activity">
    <reaction evidence="1">
        <text>Endonucleolytic cleavage to 5'-phosphooligonucleotide end-products.</text>
        <dbReference type="EC" id="3.1.21.2"/>
    </reaction>
</comment>
<comment type="cofactor">
    <cofactor evidence="1">
        <name>Zn(2+)</name>
        <dbReference type="ChEBI" id="CHEBI:29105"/>
    </cofactor>
    <text evidence="1">Binds 3 Zn(2+) ions.</text>
</comment>
<comment type="similarity">
    <text evidence="1">Belongs to the AP endonuclease 2 family.</text>
</comment>
<feature type="chain" id="PRO_0000190894" description="Probable endonuclease 4">
    <location>
        <begin position="1"/>
        <end position="281"/>
    </location>
</feature>
<feature type="binding site" evidence="1">
    <location>
        <position position="78"/>
    </location>
    <ligand>
        <name>Zn(2+)</name>
        <dbReference type="ChEBI" id="CHEBI:29105"/>
        <label>1</label>
    </ligand>
</feature>
<feature type="binding site" evidence="1">
    <location>
        <position position="118"/>
    </location>
    <ligand>
        <name>Zn(2+)</name>
        <dbReference type="ChEBI" id="CHEBI:29105"/>
        <label>1</label>
    </ligand>
</feature>
<feature type="binding site" evidence="1">
    <location>
        <position position="149"/>
    </location>
    <ligand>
        <name>Zn(2+)</name>
        <dbReference type="ChEBI" id="CHEBI:29105"/>
        <label>1</label>
    </ligand>
</feature>
<feature type="binding site" evidence="1">
    <location>
        <position position="149"/>
    </location>
    <ligand>
        <name>Zn(2+)</name>
        <dbReference type="ChEBI" id="CHEBI:29105"/>
        <label>2</label>
    </ligand>
</feature>
<feature type="binding site" evidence="1">
    <location>
        <position position="181"/>
    </location>
    <ligand>
        <name>Zn(2+)</name>
        <dbReference type="ChEBI" id="CHEBI:29105"/>
        <label>2</label>
    </ligand>
</feature>
<feature type="binding site" evidence="1">
    <location>
        <position position="184"/>
    </location>
    <ligand>
        <name>Zn(2+)</name>
        <dbReference type="ChEBI" id="CHEBI:29105"/>
        <label>3</label>
    </ligand>
</feature>
<feature type="binding site" evidence="1">
    <location>
        <position position="216"/>
    </location>
    <ligand>
        <name>Zn(2+)</name>
        <dbReference type="ChEBI" id="CHEBI:29105"/>
        <label>2</label>
    </ligand>
</feature>
<feature type="binding site" evidence="1">
    <location>
        <position position="229"/>
    </location>
    <ligand>
        <name>Zn(2+)</name>
        <dbReference type="ChEBI" id="CHEBI:29105"/>
        <label>3</label>
    </ligand>
</feature>
<feature type="binding site" evidence="1">
    <location>
        <position position="231"/>
    </location>
    <ligand>
        <name>Zn(2+)</name>
        <dbReference type="ChEBI" id="CHEBI:29105"/>
        <label>3</label>
    </ligand>
</feature>
<feature type="binding site" evidence="1">
    <location>
        <position position="260"/>
    </location>
    <ligand>
        <name>Zn(2+)</name>
        <dbReference type="ChEBI" id="CHEBI:29105"/>
        <label>2</label>
    </ligand>
</feature>
<reference key="1">
    <citation type="journal article" date="2000" name="Nature">
        <title>The genome sequence of the thermoacidophilic scavenger Thermoplasma acidophilum.</title>
        <authorList>
            <person name="Ruepp A."/>
            <person name="Graml W."/>
            <person name="Santos-Martinez M.-L."/>
            <person name="Koretke K.K."/>
            <person name="Volker C."/>
            <person name="Mewes H.-W."/>
            <person name="Frishman D."/>
            <person name="Stocker S."/>
            <person name="Lupas A.N."/>
            <person name="Baumeister W."/>
        </authorList>
    </citation>
    <scope>NUCLEOTIDE SEQUENCE [LARGE SCALE GENOMIC DNA]</scope>
    <source>
        <strain>ATCC 25905 / DSM 1728 / JCM 9062 / NBRC 15155 / AMRC-C165</strain>
    </source>
</reference>
<dbReference type="EC" id="3.1.21.2" evidence="1"/>
<dbReference type="EMBL" id="AL445065">
    <property type="protein sequence ID" value="CAC12020.1"/>
    <property type="molecule type" value="Genomic_DNA"/>
</dbReference>
<dbReference type="RefSeq" id="WP_010901301.1">
    <property type="nucleotide sequence ID" value="NC_002578.1"/>
</dbReference>
<dbReference type="SMR" id="Q9HJS3"/>
<dbReference type="STRING" id="273075.gene:9572105"/>
<dbReference type="PaxDb" id="273075-Ta0891"/>
<dbReference type="EnsemblBacteria" id="CAC12020">
    <property type="protein sequence ID" value="CAC12020"/>
    <property type="gene ID" value="CAC12020"/>
</dbReference>
<dbReference type="KEGG" id="tac:Ta0891"/>
<dbReference type="eggNOG" id="arCOG01894">
    <property type="taxonomic scope" value="Archaea"/>
</dbReference>
<dbReference type="HOGENOM" id="CLU_025885_0_1_2"/>
<dbReference type="InParanoid" id="Q9HJS3"/>
<dbReference type="OrthoDB" id="33250at2157"/>
<dbReference type="Proteomes" id="UP000001024">
    <property type="component" value="Chromosome"/>
</dbReference>
<dbReference type="GO" id="GO:0008833">
    <property type="term" value="F:deoxyribonuclease IV (phage-T4-induced) activity"/>
    <property type="evidence" value="ECO:0007669"/>
    <property type="project" value="UniProtKB-UniRule"/>
</dbReference>
<dbReference type="GO" id="GO:0003677">
    <property type="term" value="F:DNA binding"/>
    <property type="evidence" value="ECO:0007669"/>
    <property type="project" value="InterPro"/>
</dbReference>
<dbReference type="GO" id="GO:0003906">
    <property type="term" value="F:DNA-(apurinic or apyrimidinic site) endonuclease activity"/>
    <property type="evidence" value="ECO:0007669"/>
    <property type="project" value="TreeGrafter"/>
</dbReference>
<dbReference type="GO" id="GO:0008081">
    <property type="term" value="F:phosphoric diester hydrolase activity"/>
    <property type="evidence" value="ECO:0007669"/>
    <property type="project" value="TreeGrafter"/>
</dbReference>
<dbReference type="GO" id="GO:0008270">
    <property type="term" value="F:zinc ion binding"/>
    <property type="evidence" value="ECO:0007669"/>
    <property type="project" value="UniProtKB-UniRule"/>
</dbReference>
<dbReference type="GO" id="GO:0006284">
    <property type="term" value="P:base-excision repair"/>
    <property type="evidence" value="ECO:0007669"/>
    <property type="project" value="TreeGrafter"/>
</dbReference>
<dbReference type="CDD" id="cd00019">
    <property type="entry name" value="AP2Ec"/>
    <property type="match status" value="1"/>
</dbReference>
<dbReference type="FunFam" id="3.20.20.150:FF:000001">
    <property type="entry name" value="Probable endonuclease 4"/>
    <property type="match status" value="1"/>
</dbReference>
<dbReference type="Gene3D" id="3.20.20.150">
    <property type="entry name" value="Divalent-metal-dependent TIM barrel enzymes"/>
    <property type="match status" value="1"/>
</dbReference>
<dbReference type="HAMAP" id="MF_00152">
    <property type="entry name" value="Nfo"/>
    <property type="match status" value="1"/>
</dbReference>
<dbReference type="InterPro" id="IPR001719">
    <property type="entry name" value="AP_endonuc_2"/>
</dbReference>
<dbReference type="InterPro" id="IPR018246">
    <property type="entry name" value="AP_endonuc_F2_Zn_BS"/>
</dbReference>
<dbReference type="InterPro" id="IPR036237">
    <property type="entry name" value="Xyl_isomerase-like_sf"/>
</dbReference>
<dbReference type="InterPro" id="IPR013022">
    <property type="entry name" value="Xyl_isomerase-like_TIM-brl"/>
</dbReference>
<dbReference type="NCBIfam" id="TIGR00587">
    <property type="entry name" value="nfo"/>
    <property type="match status" value="1"/>
</dbReference>
<dbReference type="PANTHER" id="PTHR21445:SF0">
    <property type="entry name" value="APURINIC-APYRIMIDINIC ENDONUCLEASE"/>
    <property type="match status" value="1"/>
</dbReference>
<dbReference type="PANTHER" id="PTHR21445">
    <property type="entry name" value="ENDONUCLEASE IV ENDODEOXYRIBONUCLEASE IV"/>
    <property type="match status" value="1"/>
</dbReference>
<dbReference type="Pfam" id="PF01261">
    <property type="entry name" value="AP_endonuc_2"/>
    <property type="match status" value="1"/>
</dbReference>
<dbReference type="SMART" id="SM00518">
    <property type="entry name" value="AP2Ec"/>
    <property type="match status" value="1"/>
</dbReference>
<dbReference type="SUPFAM" id="SSF51658">
    <property type="entry name" value="Xylose isomerase-like"/>
    <property type="match status" value="1"/>
</dbReference>
<dbReference type="PROSITE" id="PS00729">
    <property type="entry name" value="AP_NUCLEASE_F2_1"/>
    <property type="match status" value="1"/>
</dbReference>
<dbReference type="PROSITE" id="PS00730">
    <property type="entry name" value="AP_NUCLEASE_F2_2"/>
    <property type="match status" value="1"/>
</dbReference>
<dbReference type="PROSITE" id="PS00731">
    <property type="entry name" value="AP_NUCLEASE_F2_3"/>
    <property type="match status" value="1"/>
</dbReference>
<dbReference type="PROSITE" id="PS51432">
    <property type="entry name" value="AP_NUCLEASE_F2_4"/>
    <property type="match status" value="1"/>
</dbReference>
<sequence>MIDEAIRSISKKYTIGGHISVAGGLHNGPARAAVFGFPTFQFFSKNQMRWSSPPLKDDEAAAFKSEVRKYGIESTMIHASYLINLASADPDLYKRSMEAFHDEIDRSDKLGSTFLTVHPGSNPDRADGIRRVRDALSTIGDHAVIILIENTAGQGNVIGTRLDEVAKIIDTSDKKLGVCIDTCHAWASGYDLRDSLEKFIESLDYTIGLDRIFAFHLNDAKREMGSRIDRHELIGKGTIDGGLINLIRDDRLRAKPKIMETPFGEARFEDNLRYMSSKIGE</sequence>